<reference key="1">
    <citation type="journal article" date="2000" name="DNA Res.">
        <title>Structural analysis of Arabidopsis thaliana chromosome 3. I. Sequence features of the regions of 4,504,864 bp covered by sixty P1 and TAC clones.</title>
        <authorList>
            <person name="Sato S."/>
            <person name="Nakamura Y."/>
            <person name="Kaneko T."/>
            <person name="Katoh T."/>
            <person name="Asamizu E."/>
            <person name="Tabata S."/>
        </authorList>
    </citation>
    <scope>NUCLEOTIDE SEQUENCE [LARGE SCALE GENOMIC DNA]</scope>
    <source>
        <strain>cv. Columbia</strain>
    </source>
</reference>
<reference key="2">
    <citation type="journal article" date="2017" name="Plant J.">
        <title>Araport11: a complete reannotation of the Arabidopsis thaliana reference genome.</title>
        <authorList>
            <person name="Cheng C.Y."/>
            <person name="Krishnakumar V."/>
            <person name="Chan A.P."/>
            <person name="Thibaud-Nissen F."/>
            <person name="Schobel S."/>
            <person name="Town C.D."/>
        </authorList>
    </citation>
    <scope>GENOME REANNOTATION</scope>
    <source>
        <strain>cv. Columbia</strain>
    </source>
</reference>
<reference key="3">
    <citation type="journal article" date="2003" name="Science">
        <title>Empirical analysis of transcriptional activity in the Arabidopsis genome.</title>
        <authorList>
            <person name="Yamada K."/>
            <person name="Lim J."/>
            <person name="Dale J.M."/>
            <person name="Chen H."/>
            <person name="Shinn P."/>
            <person name="Palm C.J."/>
            <person name="Southwick A.M."/>
            <person name="Wu H.C."/>
            <person name="Kim C.J."/>
            <person name="Nguyen M."/>
            <person name="Pham P.K."/>
            <person name="Cheuk R.F."/>
            <person name="Karlin-Newmann G."/>
            <person name="Liu S.X."/>
            <person name="Lam B."/>
            <person name="Sakano H."/>
            <person name="Wu T."/>
            <person name="Yu G."/>
            <person name="Miranda M."/>
            <person name="Quach H.L."/>
            <person name="Tripp M."/>
            <person name="Chang C.H."/>
            <person name="Lee J.M."/>
            <person name="Toriumi M.J."/>
            <person name="Chan M.M."/>
            <person name="Tang C.C."/>
            <person name="Onodera C.S."/>
            <person name="Deng J.M."/>
            <person name="Akiyama K."/>
            <person name="Ansari Y."/>
            <person name="Arakawa T."/>
            <person name="Banh J."/>
            <person name="Banno F."/>
            <person name="Bowser L."/>
            <person name="Brooks S.Y."/>
            <person name="Carninci P."/>
            <person name="Chao Q."/>
            <person name="Choy N."/>
            <person name="Enju A."/>
            <person name="Goldsmith A.D."/>
            <person name="Gurjal M."/>
            <person name="Hansen N.F."/>
            <person name="Hayashizaki Y."/>
            <person name="Johnson-Hopson C."/>
            <person name="Hsuan V.W."/>
            <person name="Iida K."/>
            <person name="Karnes M."/>
            <person name="Khan S."/>
            <person name="Koesema E."/>
            <person name="Ishida J."/>
            <person name="Jiang P.X."/>
            <person name="Jones T."/>
            <person name="Kawai J."/>
            <person name="Kamiya A."/>
            <person name="Meyers C."/>
            <person name="Nakajima M."/>
            <person name="Narusaka M."/>
            <person name="Seki M."/>
            <person name="Sakurai T."/>
            <person name="Satou M."/>
            <person name="Tamse R."/>
            <person name="Vaysberg M."/>
            <person name="Wallender E.K."/>
            <person name="Wong C."/>
            <person name="Yamamura Y."/>
            <person name="Yuan S."/>
            <person name="Shinozaki K."/>
            <person name="Davis R.W."/>
            <person name="Theologis A."/>
            <person name="Ecker J.R."/>
        </authorList>
    </citation>
    <scope>NUCLEOTIDE SEQUENCE [LARGE SCALE MRNA]</scope>
    <source>
        <strain>cv. Columbia</strain>
    </source>
</reference>
<reference key="4">
    <citation type="submission" date="2002-03" db="EMBL/GenBank/DDBJ databases">
        <title>Full-length cDNA from Arabidopsis thaliana.</title>
        <authorList>
            <person name="Brover V.V."/>
            <person name="Troukhan M.E."/>
            <person name="Alexandrov N.A."/>
            <person name="Lu Y.-P."/>
            <person name="Flavell R.B."/>
            <person name="Feldmann K.A."/>
        </authorList>
    </citation>
    <scope>NUCLEOTIDE SEQUENCE [LARGE SCALE MRNA]</scope>
</reference>
<reference key="5">
    <citation type="journal article" date="2004" name="Proc. Natl. Acad. Sci. U.S.A.">
        <title>FRIGIDA-related genes are required for the winter-annual habit in Arabidopsis.</title>
        <authorList>
            <person name="Michaels S.D."/>
            <person name="Bezerra I.C."/>
            <person name="Amasino R.M."/>
        </authorList>
    </citation>
    <scope>GENE FAMILY</scope>
</reference>
<reference key="6">
    <citation type="journal article" date="2010" name="Plant Mol. Biol.">
        <title>FRIGIDA and related proteins have a conserved central domain and family specific N- and C- terminal regions that are functionally important.</title>
        <authorList>
            <person name="Risk J.M."/>
            <person name="Laurie R.E."/>
            <person name="Macknight R.C."/>
            <person name="Day C.L."/>
        </authorList>
    </citation>
    <scope>GENE FAMILY</scope>
    <scope>NOMENCLATURE</scope>
    <scope>TISSUE SPECIFICITY</scope>
</reference>
<evidence type="ECO:0000256" key="1">
    <source>
        <dbReference type="SAM" id="MobiDB-lite"/>
    </source>
</evidence>
<evidence type="ECO:0000269" key="2">
    <source>
    </source>
</evidence>
<evidence type="ECO:0000305" key="3"/>
<organism>
    <name type="scientific">Arabidopsis thaliana</name>
    <name type="common">Mouse-ear cress</name>
    <dbReference type="NCBI Taxonomy" id="3702"/>
    <lineage>
        <taxon>Eukaryota</taxon>
        <taxon>Viridiplantae</taxon>
        <taxon>Streptophyta</taxon>
        <taxon>Embryophyta</taxon>
        <taxon>Tracheophyta</taxon>
        <taxon>Spermatophyta</taxon>
        <taxon>Magnoliopsida</taxon>
        <taxon>eudicotyledons</taxon>
        <taxon>Gunneridae</taxon>
        <taxon>Pentapetalae</taxon>
        <taxon>rosids</taxon>
        <taxon>malvids</taxon>
        <taxon>Brassicales</taxon>
        <taxon>Brassicaceae</taxon>
        <taxon>Camelineae</taxon>
        <taxon>Arabidopsis</taxon>
    </lineage>
</organism>
<sequence>MGSVPDPGELTELAQPSFEEFQKQTSLMTSCTLLWQELSDHFTSLEQNLMKKSEALKQMIETLDNQTQTSLESLKRREVTIDHSVEIVAGKVGERARAALESLEKARDGCGDGSNDDSGDVDDEEGLLSALKSLCLKMDARGFWNFVTARKKELENLRSKIPAALVDCVDPAMLVLEAISEVFPVDTRGDKVSNDYGWACVVILESLTPVIVDPVIGKSRLLVTPSVKEKAKEIAETWKKSLEERGRIENVKTPDVHTFLQHLVTFGIVKSEDLALYRKLVVGSAWRKQMPKLAVSVGLGDQMPDMIEELISRGQQLDAVHFTYEVGLVDKFPPVPLLKAYLRDAKKSAASIMEDSSNTGRATHLVARKEQSALKAVLKCIEEYKLEEEFPPENLKKRLDQLEKTKTEKRKPAAVPANKRTRASYNGPMPPAKAGRITNAYVSSFPFIRSPSHSPQYASPAAYPSPPTTVYSNRSPPYPYSPEIIPGSYQGSPIGYPAYNGYCNGPVPAPAPPVYHPHHHQHHQFHHQQHYY</sequence>
<feature type="chain" id="PRO_0000423743" description="FRIGIDA-like protein 4a">
    <location>
        <begin position="1"/>
        <end position="532"/>
    </location>
</feature>
<feature type="region of interest" description="Disordered" evidence="1">
    <location>
        <begin position="406"/>
        <end position="432"/>
    </location>
</feature>
<accession>Q9LUV4</accession>
<keyword id="KW-0217">Developmental protein</keyword>
<keyword id="KW-0221">Differentiation</keyword>
<keyword id="KW-0287">Flowering</keyword>
<keyword id="KW-1185">Reference proteome</keyword>
<proteinExistence type="evidence at transcript level"/>
<protein>
    <recommendedName>
        <fullName>FRIGIDA-like protein 4a</fullName>
    </recommendedName>
</protein>
<gene>
    <name type="primary">FRL4A</name>
    <name type="ordered locus">At3g22440</name>
    <name type="ORF">MCB17.20</name>
</gene>
<comment type="tissue specificity">
    <text evidence="2">Expressed in leaves, shoot apex, flowers and during seed development.</text>
</comment>
<comment type="similarity">
    <text evidence="3">Belongs to the Frigida family.</text>
</comment>
<dbReference type="EMBL" id="AB022215">
    <property type="protein sequence ID" value="BAB01784.1"/>
    <property type="molecule type" value="Genomic_DNA"/>
</dbReference>
<dbReference type="EMBL" id="CP002686">
    <property type="protein sequence ID" value="AEE76640.1"/>
    <property type="molecule type" value="Genomic_DNA"/>
</dbReference>
<dbReference type="EMBL" id="AY050770">
    <property type="protein sequence ID" value="AAK92705.1"/>
    <property type="molecule type" value="mRNA"/>
</dbReference>
<dbReference type="EMBL" id="AY096625">
    <property type="protein sequence ID" value="AAM20275.1"/>
    <property type="molecule type" value="mRNA"/>
</dbReference>
<dbReference type="EMBL" id="AY085142">
    <property type="protein sequence ID" value="AAM61695.1"/>
    <property type="molecule type" value="mRNA"/>
</dbReference>
<dbReference type="RefSeq" id="NP_566709.1">
    <property type="nucleotide sequence ID" value="NM_113143.3"/>
</dbReference>
<dbReference type="SMR" id="Q9LUV4"/>
<dbReference type="BioGRID" id="7147">
    <property type="interactions" value="17"/>
</dbReference>
<dbReference type="FunCoup" id="Q9LUV4">
    <property type="interactions" value="2486"/>
</dbReference>
<dbReference type="IntAct" id="Q9LUV4">
    <property type="interactions" value="18"/>
</dbReference>
<dbReference type="STRING" id="3702.Q9LUV4"/>
<dbReference type="iPTMnet" id="Q9LUV4"/>
<dbReference type="PaxDb" id="3702-AT3G22440.1"/>
<dbReference type="ProteomicsDB" id="228944"/>
<dbReference type="EnsemblPlants" id="AT3G22440.1">
    <property type="protein sequence ID" value="AT3G22440.1"/>
    <property type="gene ID" value="AT3G22440"/>
</dbReference>
<dbReference type="GeneID" id="821815"/>
<dbReference type="Gramene" id="AT3G22440.1">
    <property type="protein sequence ID" value="AT3G22440.1"/>
    <property type="gene ID" value="AT3G22440"/>
</dbReference>
<dbReference type="KEGG" id="ath:AT3G22440"/>
<dbReference type="Araport" id="AT3G22440"/>
<dbReference type="TAIR" id="AT3G22440"/>
<dbReference type="eggNOG" id="ENOG502QVU4">
    <property type="taxonomic scope" value="Eukaryota"/>
</dbReference>
<dbReference type="HOGENOM" id="CLU_026883_3_0_1"/>
<dbReference type="InParanoid" id="Q9LUV4"/>
<dbReference type="OMA" id="SFCVKMD"/>
<dbReference type="OrthoDB" id="685090at2759"/>
<dbReference type="PhylomeDB" id="Q9LUV4"/>
<dbReference type="PRO" id="PR:Q9LUV4"/>
<dbReference type="Proteomes" id="UP000006548">
    <property type="component" value="Chromosome 3"/>
</dbReference>
<dbReference type="ExpressionAtlas" id="Q9LUV4">
    <property type="expression patterns" value="baseline and differential"/>
</dbReference>
<dbReference type="GO" id="GO:0030154">
    <property type="term" value="P:cell differentiation"/>
    <property type="evidence" value="ECO:0007669"/>
    <property type="project" value="UniProtKB-KW"/>
</dbReference>
<dbReference type="GO" id="GO:0009908">
    <property type="term" value="P:flower development"/>
    <property type="evidence" value="ECO:0007669"/>
    <property type="project" value="UniProtKB-KW"/>
</dbReference>
<dbReference type="InterPro" id="IPR012474">
    <property type="entry name" value="Frigida"/>
</dbReference>
<dbReference type="PANTHER" id="PTHR31791">
    <property type="entry name" value="FRIGIDA-LIKE PROTEIN 3-RELATED"/>
    <property type="match status" value="1"/>
</dbReference>
<dbReference type="PANTHER" id="PTHR31791:SF2">
    <property type="entry name" value="FRIGIDA-LIKE PROTEIN 4A-RELATED"/>
    <property type="match status" value="1"/>
</dbReference>
<dbReference type="Pfam" id="PF07899">
    <property type="entry name" value="Frigida"/>
    <property type="match status" value="1"/>
</dbReference>
<name>FRL4A_ARATH</name>